<proteinExistence type="inferred from homology"/>
<accession>Q8YDH0</accession>
<feature type="chain" id="PRO_0000290159" description="Putative peptide import ATP-binding protein BMEII0206">
    <location>
        <begin position="1"/>
        <end position="332"/>
    </location>
</feature>
<feature type="domain" description="ABC transporter" evidence="2">
    <location>
        <begin position="11"/>
        <end position="261"/>
    </location>
</feature>
<feature type="binding site" evidence="2">
    <location>
        <begin position="47"/>
        <end position="54"/>
    </location>
    <ligand>
        <name>ATP</name>
        <dbReference type="ChEBI" id="CHEBI:30616"/>
    </ligand>
</feature>
<evidence type="ECO:0000250" key="1"/>
<evidence type="ECO:0000255" key="2">
    <source>
        <dbReference type="PROSITE-ProRule" id="PRU00434"/>
    </source>
</evidence>
<evidence type="ECO:0000305" key="3"/>
<sequence>MTISLKTAPLLEVSNLSVDFRTDGGWINAVDDVNFTLAPRETLGLVGESGSGKSVTALSLLRLHDQRNSRLGGSVRYKGEDLFTLATSRLQQIRGHEIAMVFQDPIHTLNPVLTIGRQIEEGLRLHHGLQGREARKRAIELLDRVRIPDVARRIDEYPHRMSGGQRQRVMIAIAIAGDPKILIADEPTTALDVTVQAQIMELLRNLRDELSMSVILISHDLGLVSEFADRAMVMYAGQPVETGPINKIFDEPLHPYTEGLLSAIPDLDDDLDRLPTIPGSIPEPSRRPPGCRFAPRCTFAQASCVKPQPIMSLTGGRASRCPPRLPTEECVL</sequence>
<dbReference type="EC" id="7.4.2.-"/>
<dbReference type="EMBL" id="AE008918">
    <property type="protein sequence ID" value="AAL53447.1"/>
    <property type="molecule type" value="Genomic_DNA"/>
</dbReference>
<dbReference type="PIR" id="AD3535">
    <property type="entry name" value="AD3535"/>
</dbReference>
<dbReference type="RefSeq" id="WP_004682539.1">
    <property type="nucleotide sequence ID" value="NC_003318.1"/>
</dbReference>
<dbReference type="SMR" id="Q8YDH0"/>
<dbReference type="GeneID" id="29595120"/>
<dbReference type="KEGG" id="bme:BMEII0206"/>
<dbReference type="KEGG" id="bmel:DK63_3038"/>
<dbReference type="PATRIC" id="fig|224914.52.peg.3184"/>
<dbReference type="eggNOG" id="COG0444">
    <property type="taxonomic scope" value="Bacteria"/>
</dbReference>
<dbReference type="PhylomeDB" id="Q8YDH0"/>
<dbReference type="Proteomes" id="UP000000419">
    <property type="component" value="Chromosome II"/>
</dbReference>
<dbReference type="GO" id="GO:0005886">
    <property type="term" value="C:plasma membrane"/>
    <property type="evidence" value="ECO:0007669"/>
    <property type="project" value="UniProtKB-SubCell"/>
</dbReference>
<dbReference type="GO" id="GO:0005524">
    <property type="term" value="F:ATP binding"/>
    <property type="evidence" value="ECO:0007669"/>
    <property type="project" value="UniProtKB-KW"/>
</dbReference>
<dbReference type="GO" id="GO:0016887">
    <property type="term" value="F:ATP hydrolysis activity"/>
    <property type="evidence" value="ECO:0007669"/>
    <property type="project" value="InterPro"/>
</dbReference>
<dbReference type="GO" id="GO:0015833">
    <property type="term" value="P:peptide transport"/>
    <property type="evidence" value="ECO:0007669"/>
    <property type="project" value="UniProtKB-KW"/>
</dbReference>
<dbReference type="GO" id="GO:0015031">
    <property type="term" value="P:protein transport"/>
    <property type="evidence" value="ECO:0007669"/>
    <property type="project" value="UniProtKB-KW"/>
</dbReference>
<dbReference type="CDD" id="cd03257">
    <property type="entry name" value="ABC_NikE_OppD_transporters"/>
    <property type="match status" value="1"/>
</dbReference>
<dbReference type="FunFam" id="3.40.50.300:FF:000016">
    <property type="entry name" value="Oligopeptide ABC transporter ATP-binding component"/>
    <property type="match status" value="1"/>
</dbReference>
<dbReference type="Gene3D" id="3.40.50.300">
    <property type="entry name" value="P-loop containing nucleotide triphosphate hydrolases"/>
    <property type="match status" value="1"/>
</dbReference>
<dbReference type="InterPro" id="IPR003593">
    <property type="entry name" value="AAA+_ATPase"/>
</dbReference>
<dbReference type="InterPro" id="IPR050388">
    <property type="entry name" value="ABC_Ni/Peptide_Import"/>
</dbReference>
<dbReference type="InterPro" id="IPR003439">
    <property type="entry name" value="ABC_transporter-like_ATP-bd"/>
</dbReference>
<dbReference type="InterPro" id="IPR017871">
    <property type="entry name" value="ABC_transporter-like_CS"/>
</dbReference>
<dbReference type="InterPro" id="IPR013563">
    <property type="entry name" value="Oligopep_ABC_C"/>
</dbReference>
<dbReference type="InterPro" id="IPR027417">
    <property type="entry name" value="P-loop_NTPase"/>
</dbReference>
<dbReference type="NCBIfam" id="TIGR01727">
    <property type="entry name" value="oligo_HPY"/>
    <property type="match status" value="1"/>
</dbReference>
<dbReference type="PANTHER" id="PTHR43297:SF2">
    <property type="entry name" value="DIPEPTIDE TRANSPORT ATP-BINDING PROTEIN DPPD"/>
    <property type="match status" value="1"/>
</dbReference>
<dbReference type="PANTHER" id="PTHR43297">
    <property type="entry name" value="OLIGOPEPTIDE TRANSPORT ATP-BINDING PROTEIN APPD"/>
    <property type="match status" value="1"/>
</dbReference>
<dbReference type="Pfam" id="PF00005">
    <property type="entry name" value="ABC_tran"/>
    <property type="match status" value="1"/>
</dbReference>
<dbReference type="Pfam" id="PF08352">
    <property type="entry name" value="oligo_HPY"/>
    <property type="match status" value="1"/>
</dbReference>
<dbReference type="SMART" id="SM00382">
    <property type="entry name" value="AAA"/>
    <property type="match status" value="1"/>
</dbReference>
<dbReference type="SUPFAM" id="SSF52540">
    <property type="entry name" value="P-loop containing nucleoside triphosphate hydrolases"/>
    <property type="match status" value="1"/>
</dbReference>
<dbReference type="PROSITE" id="PS00211">
    <property type="entry name" value="ABC_TRANSPORTER_1"/>
    <property type="match status" value="1"/>
</dbReference>
<dbReference type="PROSITE" id="PS50893">
    <property type="entry name" value="ABC_TRANSPORTER_2"/>
    <property type="match status" value="1"/>
</dbReference>
<organism>
    <name type="scientific">Brucella melitensis biotype 1 (strain ATCC 23456 / CCUG 17765 / NCTC 10094 / 16M)</name>
    <dbReference type="NCBI Taxonomy" id="224914"/>
    <lineage>
        <taxon>Bacteria</taxon>
        <taxon>Pseudomonadati</taxon>
        <taxon>Pseudomonadota</taxon>
        <taxon>Alphaproteobacteria</taxon>
        <taxon>Hyphomicrobiales</taxon>
        <taxon>Brucellaceae</taxon>
        <taxon>Brucella/Ochrobactrum group</taxon>
        <taxon>Brucella</taxon>
    </lineage>
</organism>
<gene>
    <name type="ordered locus">BMEII0206</name>
</gene>
<reference key="1">
    <citation type="journal article" date="2002" name="Proc. Natl. Acad. Sci. U.S.A.">
        <title>The genome sequence of the facultative intracellular pathogen Brucella melitensis.</title>
        <authorList>
            <person name="DelVecchio V.G."/>
            <person name="Kapatral V."/>
            <person name="Redkar R.J."/>
            <person name="Patra G."/>
            <person name="Mujer C."/>
            <person name="Los T."/>
            <person name="Ivanova N."/>
            <person name="Anderson I."/>
            <person name="Bhattacharyya A."/>
            <person name="Lykidis A."/>
            <person name="Reznik G."/>
            <person name="Jablonski L."/>
            <person name="Larsen N."/>
            <person name="D'Souza M."/>
            <person name="Bernal A."/>
            <person name="Mazur M."/>
            <person name="Goltsman E."/>
            <person name="Selkov E."/>
            <person name="Elzer P.H."/>
            <person name="Hagius S."/>
            <person name="O'Callaghan D."/>
            <person name="Letesson J.-J."/>
            <person name="Haselkorn R."/>
            <person name="Kyrpides N.C."/>
            <person name="Overbeek R."/>
        </authorList>
    </citation>
    <scope>NUCLEOTIDE SEQUENCE [LARGE SCALE GENOMIC DNA]</scope>
    <source>
        <strain>ATCC 23456 / CCUG 17765 / NCTC 10094 / 16M</strain>
    </source>
</reference>
<protein>
    <recommendedName>
        <fullName>Putative peptide import ATP-binding protein BMEII0206</fullName>
        <ecNumber>7.4.2.-</ecNumber>
    </recommendedName>
</protein>
<keyword id="KW-0067">ATP-binding</keyword>
<keyword id="KW-0997">Cell inner membrane</keyword>
<keyword id="KW-1003">Cell membrane</keyword>
<keyword id="KW-0472">Membrane</keyword>
<keyword id="KW-0547">Nucleotide-binding</keyword>
<keyword id="KW-0571">Peptide transport</keyword>
<keyword id="KW-0653">Protein transport</keyword>
<keyword id="KW-1278">Translocase</keyword>
<keyword id="KW-0813">Transport</keyword>
<comment type="function">
    <text evidence="1">Probably part of an ABC transporter complex that could be involved in peptide import. Probably responsible for energy coupling to the transport system (By similarity).</text>
</comment>
<comment type="subunit">
    <text evidence="3">The complex is composed of two ATP-binding proteins (BMEII0205 and BMEII0206), two transmembrane proteins (BMEII0207/BMEII0208 and BMEII0209) and a solute-binding protein (BMEII0210).</text>
</comment>
<comment type="subcellular location">
    <subcellularLocation>
        <location evidence="3">Cell inner membrane</location>
        <topology evidence="3">Peripheral membrane protein</topology>
    </subcellularLocation>
</comment>
<comment type="similarity">
    <text evidence="3">Belongs to the ABC transporter superfamily.</text>
</comment>
<name>Y206_BRUME</name>